<gene>
    <name evidence="8 9" type="primary">RhopH2</name>
    <name evidence="11" type="ORF">PF3D7_0929400</name>
</gene>
<dbReference type="EMBL" id="AL844508">
    <property type="protein sequence ID" value="CAX64248.1"/>
    <property type="molecule type" value="Genomic_DNA"/>
</dbReference>
<dbReference type="RefSeq" id="XP_002808967.1">
    <property type="nucleotide sequence ID" value="XM_002808921.1"/>
</dbReference>
<dbReference type="SMR" id="C0H571"/>
<dbReference type="FunCoup" id="C0H571">
    <property type="interactions" value="608"/>
</dbReference>
<dbReference type="STRING" id="5833.PFI1445w"/>
<dbReference type="DrugBank" id="DB11638">
    <property type="generic name" value="Artenimol"/>
</dbReference>
<dbReference type="PaxDb" id="5833-PFI1445w"/>
<dbReference type="EnsemblProtists" id="CAX64248">
    <property type="protein sequence ID" value="CAX64248"/>
    <property type="gene ID" value="PF3D7_0929400"/>
</dbReference>
<dbReference type="GeneID" id="813569"/>
<dbReference type="KEGG" id="pfa:PF3D7_0929400"/>
<dbReference type="VEuPathDB" id="PlasmoDB:PF3D7_0929400"/>
<dbReference type="HOGENOM" id="CLU_256474_0_0_1"/>
<dbReference type="InParanoid" id="C0H571"/>
<dbReference type="OMA" id="DVYDFFY"/>
<dbReference type="OrthoDB" id="391866at2759"/>
<dbReference type="PhylomeDB" id="C0H571"/>
<dbReference type="Proteomes" id="UP000001450">
    <property type="component" value="Chromosome 9"/>
</dbReference>
<dbReference type="GO" id="GO:0031410">
    <property type="term" value="C:cytoplasmic vesicle"/>
    <property type="evidence" value="ECO:0007669"/>
    <property type="project" value="UniProtKB-KW"/>
</dbReference>
<dbReference type="GO" id="GO:0020002">
    <property type="term" value="C:host cell plasma membrane"/>
    <property type="evidence" value="ECO:0007669"/>
    <property type="project" value="UniProtKB-SubCell"/>
</dbReference>
<dbReference type="GO" id="GO:0016020">
    <property type="term" value="C:membrane"/>
    <property type="evidence" value="ECO:0007669"/>
    <property type="project" value="UniProtKB-KW"/>
</dbReference>
<dbReference type="GO" id="GO:0020008">
    <property type="term" value="C:rhoptry"/>
    <property type="evidence" value="ECO:0000314"/>
    <property type="project" value="GeneDB"/>
</dbReference>
<dbReference type="GO" id="GO:0020005">
    <property type="term" value="C:symbiont-containing vacuole membrane"/>
    <property type="evidence" value="ECO:0007669"/>
    <property type="project" value="UniProtKB-SubCell"/>
</dbReference>
<keyword id="KW-0963">Cytoplasm</keyword>
<keyword id="KW-0968">Cytoplasmic vesicle</keyword>
<keyword id="KW-1015">Disulfide bond</keyword>
<keyword id="KW-1032">Host cell membrane</keyword>
<keyword id="KW-1035">Host cytoplasm</keyword>
<keyword id="KW-1043">Host membrane</keyword>
<keyword id="KW-0472">Membrane</keyword>
<keyword id="KW-1185">Reference proteome</keyword>
<keyword id="KW-0732">Signal</keyword>
<keyword id="KW-0812">Transmembrane</keyword>
<keyword id="KW-1133">Transmembrane helix</keyword>
<keyword id="KW-0813">Transport</keyword>
<sequence>MIKVTIFLLLSIFSFNLYGLELNEKVSIKYGAEQGVGSADSNTKLCSDILKYLYMDEYLSEGDKATFEKKCHNVIGNIRNTFSNKNTIKEGNEFLMSILHMKSLYGNNNNNNAGSESDVTLKSLYLSLKGSQNTEGESEVPSDDEINKTIMNFVKFNKYLLDNSNDIKKVHDFLVLTSQSNENLLPNKEKLFEQIVDQIKYFDEYFFASGGKIKVKKGYLKYNFLDIYKQPVCSAYLHLCSRYYESVSIYIRLKKVFNGIPAFLDKNCRKVKGEEFKKLMDMELKHNHIVERFDKYIISDDLYYVNMKVFDLKNVDKIQVSKIDDINNLNIYEHKETMHLSAKNLSRYIDIKKELNDEKAYKQLMSAIRKYVTTLTKADSDITYFVKQLDDEEIERFLIDLNFFLYNGFLRITEDKHLINADDVSPSYINLYRSNNIVALYILKTQYEENKLSEYRAHKFYRRKRVSNITNDMIKKDFTQTNALTNLPNLDNKKTTEYYLKEYENFVENFQPDLHDIMKLQLFFTMAFKDCNVNQNFTETSKKLWFDLLYAYDKFGWFYIHPNEVINSINKTDFVRHVLVSRNFLLKNNDQLTFLETQVAKIVEIINLSLEVDKSPDSLDFSIPMNFFNHKNGYHVMNDDKLKLLTSYEYIDSIANNYFFLSEYKNDVFRTGNNFKLYFNLPNIYSLAYQLFNELAININVITNVPLKKYLKYNASYAYFTLMNMIGKNHDIYSKGSRFVYASYILGLVFFIESHIDIARLKPKDFFFMKQSLPIIDHVYHKDLKTLKKNCTLLTDFMKINKNSQNYSLTHTEEMIKILGLLTVTLWAKEGKKSVYYDDDVSLYRKLMVSCVFNGGETIQEKLANNIEKSCDISQYGIKSKNLKDMIDINLSIHKWNPAEIEKLAYSFVLSCKMQKLMYKPMNVEKLPLEDYYKLSLAPDMVKTYHCYKLGKQAAELLESIILKKKFVRFRVTDAIDVYDFFYIKKVLSSRIKKEYNEFLQDKRAFEKKELETILNNSPFSEEQTMKLINSYECHWFTSYENFRILWMHASSNLGTGTYLKNFFSELWQNIRFLFKSKLKIRDMEYFSGDISQMNLLDYYSPMVHSESHCQEKMQVLFITLRDSKEENRSEIAQKVKSAYYQCKLDYYKNHHSDFIHRIHPNDFLNNKVYVLKQPYYLMSNVPLNNPKKVSRLFVTEGTLEYLLLDKINIPECFGPCTKLHFNKVVIKESKQRIYDMTINNALVPEIQPYNRRKYMTIYINEAYIKNIVSDALTSEEIKRHDIQKGNIKICMGKSTYLTEPILTEEHFNLTHKPVYDFSSVKHNLKVFHMKNEHLVSEDPNDDCFINYPLATINLDISDPYKEISEDLIKNLYILKSS</sequence>
<organism evidence="12">
    <name type="scientific">Plasmodium falciparum (isolate 3D7)</name>
    <dbReference type="NCBI Taxonomy" id="36329"/>
    <lineage>
        <taxon>Eukaryota</taxon>
        <taxon>Sar</taxon>
        <taxon>Alveolata</taxon>
        <taxon>Apicomplexa</taxon>
        <taxon>Aconoidasida</taxon>
        <taxon>Haemosporida</taxon>
        <taxon>Plasmodiidae</taxon>
        <taxon>Plasmodium</taxon>
        <taxon>Plasmodium (Laverania)</taxon>
    </lineage>
</organism>
<comment type="function">
    <text evidence="5">Participates in the formation of new permeability pathways in Plasmodium-infected erythrocytes enabling the uptake of nutrients from the blood plasma (PubMed:28252383). Required for maintaining invasion capacity of merozoites (PubMed:28252383). Required for parasite growth and proliferation (PubMed:28252383).</text>
</comment>
<comment type="subunit">
    <text evidence="2 5 6">Component of the RhopH complex (PubMed:28252383, PubMed:35393572). RhopH complex is composed of CLAG3.1/CLAG3.2, RhopH2 and RhopH3 with a 1:1:1 subunit stoichiometry (By similarity). Interacts with CLAG3.1/CLAG3.2 (By similarity).</text>
</comment>
<comment type="subcellular location">
    <subcellularLocation>
        <location evidence="5 6">Host cell membrane</location>
        <topology evidence="3">Single-pass membrane protein</topology>
    </subcellularLocation>
    <subcellularLocation>
        <location evidence="5 6">Host cell membrane</location>
        <topology evidence="5">Peripheral membrane protein</topology>
    </subcellularLocation>
    <subcellularLocation>
        <location evidence="6">Parasitophorous vacuole membrane</location>
        <topology evidence="3">Single-pass membrane protein</topology>
    </subcellularLocation>
    <subcellularLocation>
        <location evidence="5">Host cytoplasm</location>
    </subcellularLocation>
    <subcellularLocation>
        <location evidence="6">Cytoplasm</location>
    </subcellularLocation>
    <subcellularLocation>
        <location evidence="4 5 6">Cytoplasmic vesicle</location>
        <location evidence="4 5 6">Secretory vesicle</location>
        <location evidence="4 5 6">Rhoptry</location>
    </subcellularLocation>
    <text evidence="2">Export to host cytosol is mediated by the Plasmodium translocon of exported proteins (PTEX) complex.</text>
</comment>
<comment type="developmental stage">
    <text evidence="4 5 6">Expressed in merozoites (at protein level) (PubMed:17175193, PubMed:35393572). Expressed in ring-stage parasites (at protein level) (PubMed:28252383, PubMed:35393572). Expressed in trophozoites (at protein level) (PubMed:17175193, PubMed:28252383, PubMed:35393572). Expressed at in developing schizonts (at protein level) (PubMed:17175193, PubMed:28252383, PubMed:35393572).</text>
</comment>
<comment type="disruption phenotype">
    <text evidence="5">Conditional knockdown reduces parasite growth and proliferation (PubMed:28252383). Late-ring stage parasites have irregular shape and trophozoites exhibit an abnormal stunted phenotype rather than progressing to mature trophozoites (PubMed:28252383). Parasites that transition to schizonts harbor significantly lower numbers of merozoites per schizont (PubMed:28252383). Delayed parasite maturation (PubMed:28252383). No obvious differences in general schizont morphology or in the ability of the erythrocyte to burst (PubMed:28252383). Merozoite clumping after egress (PubMed:28252383). Reduced capacity of merozoites to invade an erythrocyte (PubMed:28252383). Resistance of infected erythrocytes to sorbitol and alanine lysis (PubMed:28252383). Decreased levels of vitamins, such as folate and thiamine phosphates, in parasites (PubMed:28252383). Accumulation of urea cycle intermediate argininosuccinate in parasites (PubMed:28252383). Decreased levels of intermediates in the de novo pyrimidine synthesis pathway, such as N-carbamoyl L-aspartate, dihydroorotate and orotate, in parasites (PubMed:28252383). No significant effects on protein export (PubMed:28252383).</text>
</comment>
<protein>
    <recommendedName>
        <fullName evidence="10">High molecular weight rhoptry protein 2</fullName>
    </recommendedName>
</protein>
<name>RCH2_PLAF7</name>
<accession>C0H571</accession>
<feature type="signal peptide" evidence="7">
    <location>
        <begin position="1"/>
        <end position="19"/>
    </location>
</feature>
<feature type="chain" id="PRO_5002896657" description="High molecular weight rhoptry protein 2" evidence="10">
    <location>
        <begin position="20"/>
        <end position="1378"/>
    </location>
</feature>
<feature type="transmembrane region" description="Helical" evidence="3">
    <location>
        <begin position="739"/>
        <end position="759"/>
    </location>
</feature>
<feature type="disulfide bond" evidence="1">
    <location>
        <begin position="46"/>
        <end position="71"/>
    </location>
</feature>
<feature type="disulfide bond" evidence="1">
    <location>
        <begin position="233"/>
        <end position="240"/>
    </location>
</feature>
<feature type="disulfide bond" evidence="1">
    <location>
        <begin position="791"/>
        <end position="851"/>
    </location>
</feature>
<feature type="disulfide bond" evidence="1">
    <location>
        <begin position="871"/>
        <end position="912"/>
    </location>
</feature>
<feature type="disulfide bond" evidence="1">
    <location>
        <begin position="947"/>
        <end position="1034"/>
    </location>
</feature>
<reference evidence="12" key="1">
    <citation type="journal article" date="2002" name="Nature">
        <title>Genome sequence of the human malaria parasite Plasmodium falciparum.</title>
        <authorList>
            <person name="Gardner M.J."/>
            <person name="Hall N."/>
            <person name="Fung E."/>
            <person name="White O."/>
            <person name="Berriman M."/>
            <person name="Hyman R.W."/>
            <person name="Carlton J.M."/>
            <person name="Pain A."/>
            <person name="Nelson K.E."/>
            <person name="Bowman S."/>
            <person name="Paulsen I.T."/>
            <person name="James K.D."/>
            <person name="Eisen J.A."/>
            <person name="Rutherford K.M."/>
            <person name="Salzberg S.L."/>
            <person name="Craig A."/>
            <person name="Kyes S."/>
            <person name="Chan M.-S."/>
            <person name="Nene V."/>
            <person name="Shallom S.J."/>
            <person name="Suh B."/>
            <person name="Peterson J."/>
            <person name="Angiuoli S."/>
            <person name="Pertea M."/>
            <person name="Allen J."/>
            <person name="Selengut J."/>
            <person name="Haft D."/>
            <person name="Mather M.W."/>
            <person name="Vaidya A.B."/>
            <person name="Martin D.M.A."/>
            <person name="Fairlamb A.H."/>
            <person name="Fraunholz M.J."/>
            <person name="Roos D.S."/>
            <person name="Ralph S.A."/>
            <person name="McFadden G.I."/>
            <person name="Cummings L.M."/>
            <person name="Subramanian G.M."/>
            <person name="Mungall C."/>
            <person name="Venter J.C."/>
            <person name="Carucci D.J."/>
            <person name="Hoffman S.L."/>
            <person name="Newbold C."/>
            <person name="Davis R.W."/>
            <person name="Fraser C.M."/>
            <person name="Barrell B.G."/>
        </authorList>
    </citation>
    <scope>NUCLEOTIDE SEQUENCE [LARGE SCALE GENOMIC DNA]</scope>
    <source>
        <strain evidence="12">3D7</strain>
    </source>
</reference>
<reference evidence="12" key="2">
    <citation type="journal article" date="2002" name="Nature">
        <title>Sequence of Plasmodium falciparum chromosomes 1, 3-9 and 13.</title>
        <authorList>
            <person name="Hall N."/>
            <person name="Pain A."/>
            <person name="Berriman M."/>
            <person name="Churcher C.M."/>
            <person name="Harris B."/>
            <person name="Harris D."/>
            <person name="Mungall K.L."/>
            <person name="Bowman S."/>
            <person name="Atkin R."/>
            <person name="Baker S."/>
            <person name="Barron A."/>
            <person name="Brooks K."/>
            <person name="Buckee C.O."/>
            <person name="Burrows C."/>
            <person name="Cherevach I."/>
            <person name="Chillingworth C."/>
            <person name="Chillingworth T."/>
            <person name="Christodoulou Z."/>
            <person name="Clark L."/>
            <person name="Clark R."/>
            <person name="Corton C."/>
            <person name="Cronin A."/>
            <person name="Davies R.M."/>
            <person name="Davis P."/>
            <person name="Dear P."/>
            <person name="Dearden F."/>
            <person name="Doggett J."/>
            <person name="Feltwell T."/>
            <person name="Goble A."/>
            <person name="Goodhead I."/>
            <person name="Gwilliam R."/>
            <person name="Hamlin N."/>
            <person name="Hance Z."/>
            <person name="Harper D."/>
            <person name="Hauser H."/>
            <person name="Hornsby T."/>
            <person name="Holroyd S."/>
            <person name="Horrocks P."/>
            <person name="Humphray S."/>
            <person name="Jagels K."/>
            <person name="James K.D."/>
            <person name="Johnson D."/>
            <person name="Kerhornou A."/>
            <person name="Knights A."/>
            <person name="Konfortov B."/>
            <person name="Kyes S."/>
            <person name="Larke N."/>
            <person name="Lawson D."/>
            <person name="Lennard N."/>
            <person name="Line A."/>
            <person name="Maddison M."/>
            <person name="Mclean J."/>
            <person name="Mooney P."/>
            <person name="Moule S."/>
            <person name="Murphy L."/>
            <person name="Oliver K."/>
            <person name="Ormond D."/>
            <person name="Price C."/>
            <person name="Quail M.A."/>
            <person name="Rabbinowitsch E."/>
            <person name="Rajandream M.A."/>
            <person name="Rutter S."/>
            <person name="Rutherford K.M."/>
            <person name="Sanders M."/>
            <person name="Simmonds M."/>
            <person name="Seeger K."/>
            <person name="Sharp S."/>
            <person name="Smith R."/>
            <person name="Squares R."/>
            <person name="Squares S."/>
            <person name="Stevens K."/>
            <person name="Taylor K."/>
            <person name="Tivey A."/>
            <person name="Unwin L."/>
            <person name="Whitehead S."/>
            <person name="Woodward J.R."/>
            <person name="Sulston J.E."/>
            <person name="Craig A."/>
            <person name="Newbold C."/>
            <person name="Barrell B.G."/>
        </authorList>
    </citation>
    <scope>NUCLEOTIDE SEQUENCE [LARGE SCALE GENOMIC DNA]</scope>
    <source>
        <strain evidence="12">3D7</strain>
    </source>
</reference>
<reference evidence="10" key="3">
    <citation type="journal article" date="2007" name="Parasitol. Int.">
        <title>The Plasmodium falciparum RhopH2 promoter and first 24 amino acids are sufficient to target proteins to the rhoptries.</title>
        <authorList>
            <person name="Ghoneim A."/>
            <person name="Kaneko O."/>
            <person name="Tsuboi T."/>
            <person name="Torii M."/>
        </authorList>
    </citation>
    <scope>SUBCELLULAR LOCATION</scope>
    <scope>DEVELOPMENTAL STAGE</scope>
    <source>
        <strain evidence="7">3D7</strain>
    </source>
</reference>
<reference evidence="10" key="4">
    <citation type="journal article" date="2017" name="Elife">
        <title>Plasmodium falciparum parasites deploy RhopH2 into the host erythrocyte to obtain nutrients, grow and replicate.</title>
        <authorList>
            <person name="Counihan N.A."/>
            <person name="Chisholm S.A."/>
            <person name="Bullen H.E."/>
            <person name="Srivastava A."/>
            <person name="Sanders P.R."/>
            <person name="Jonsdottir T.K."/>
            <person name="Weiss G.E."/>
            <person name="Ghosh S."/>
            <person name="Crabb B.S."/>
            <person name="Creek D.J."/>
            <person name="Gilson P.R."/>
            <person name="de Koning-Ward T.F."/>
        </authorList>
    </citation>
    <scope>FUNCTION</scope>
    <scope>SUBUNIT</scope>
    <scope>SUBCELLULAR LOCATION</scope>
    <scope>DEVELOPMENTAL STAGE</scope>
    <scope>DISRUPTION PHENOTYPE</scope>
    <source>
        <strain evidence="8">3D7</strain>
    </source>
</reference>
<reference evidence="10" key="5">
    <citation type="journal article" date="2022" name="Commun. Biol.">
        <title>RhopH2 and RhopH3 export enables assembly of the RhopH complex on P. falciparum-infected erythrocyte membranes.</title>
        <authorList>
            <person name="Pasternak M."/>
            <person name="Verhoef J.M.J."/>
            <person name="Wong W."/>
            <person name="Triglia T."/>
            <person name="Mlodzianoski M.J."/>
            <person name="Geoghegan N."/>
            <person name="Evelyn C."/>
            <person name="Wardak A.Z."/>
            <person name="Rogers K."/>
            <person name="Cowman A.F."/>
        </authorList>
    </citation>
    <scope>MASS SPECTROMETRY</scope>
    <scope>IDENTIFICATION IN RHOPH COMPLEX</scope>
    <scope>SUBCELLULAR LOCATION</scope>
    <scope>DEVELOPMENTAL STAGE</scope>
    <source>
        <strain evidence="9">3D7</strain>
    </source>
</reference>
<proteinExistence type="evidence at protein level"/>
<evidence type="ECO:0000250" key="1">
    <source>
        <dbReference type="UniProtKB" id="A0A2I0BSI4"/>
    </source>
</evidence>
<evidence type="ECO:0000250" key="2">
    <source>
        <dbReference type="UniProtKB" id="Q8I060"/>
    </source>
</evidence>
<evidence type="ECO:0000255" key="3"/>
<evidence type="ECO:0000269" key="4">
    <source>
    </source>
</evidence>
<evidence type="ECO:0000269" key="5">
    <source>
    </source>
</evidence>
<evidence type="ECO:0000269" key="6">
    <source>
    </source>
</evidence>
<evidence type="ECO:0000303" key="7">
    <source>
    </source>
</evidence>
<evidence type="ECO:0000303" key="8">
    <source>
    </source>
</evidence>
<evidence type="ECO:0000303" key="9">
    <source>
    </source>
</evidence>
<evidence type="ECO:0000305" key="10"/>
<evidence type="ECO:0000312" key="11">
    <source>
        <dbReference type="EMBL" id="CAX64248.1"/>
    </source>
</evidence>
<evidence type="ECO:0000312" key="12">
    <source>
        <dbReference type="Proteomes" id="UP000001450"/>
    </source>
</evidence>